<comment type="function">
    <text evidence="3">Molybdo-flavoprotein enzyme complex involved in nicotine degradation. The subunit gamma (large subunit) contains the substrate-binding sites, the subunit alpha (medium subunit) binds FAD and the subunit beta (small subunit) has a 2Fe-2S ferredoxin-type domain which binds 2 2Fe-2S clusters.</text>
</comment>
<comment type="catalytic activity">
    <reaction>
        <text>6-hydroxypseudooxynicotine + A + H2O = 2,6-dihydroxypseudooxynicotine + AH2</text>
        <dbReference type="Rhea" id="RHEA:34223"/>
        <dbReference type="ChEBI" id="CHEBI:13193"/>
        <dbReference type="ChEBI" id="CHEBI:15377"/>
        <dbReference type="ChEBI" id="CHEBI:17499"/>
        <dbReference type="ChEBI" id="CHEBI:58682"/>
        <dbReference type="ChEBI" id="CHEBI:66944"/>
        <dbReference type="EC" id="1.5.99.14"/>
    </reaction>
</comment>
<comment type="cofactor">
    <cofactor evidence="3">
        <name>FAD</name>
        <dbReference type="ChEBI" id="CHEBI:57692"/>
    </cofactor>
    <text evidence="3">Binds 1 FAD per subunit.</text>
</comment>
<comment type="pathway">
    <text>Alkaloid degradation; nicotine degradation.</text>
</comment>
<comment type="subunit">
    <text evidence="4">Heterohexamer of 2 alpha (kdhA), 2 beta (kdhB) and 2 gamma (kdhC) subunit. Dimer of heterotrimers (Probable).</text>
</comment>
<sequence>MKPPSFDYVVADSVEHALRLLADGGDDAKIIAGGQSLVPLLNFRMSRPSLLVDINRVPGLANIRKSDQTIAIGALTRHAKLTTSKTISQNLPILSEAAAWIAHPQIRNRGTIGGSLAHADAAAELPVVLLALDAYVTAQSLQGERKIPLKELLVSHFVSSILPGELIVEVNVPQLPHGSGAAFDEFSRRHGDYAIGGAASIVTLDEQGKCSRARITVLGGGSTAIRCQEAENILIDSTLSSHDIAAAAHAAVQGLDPVPTVHGSAQYRAQVIRTMVERTLAKALHRARPTKESMDH</sequence>
<accession>O87681</accession>
<proteinExistence type="evidence at protein level"/>
<evidence type="ECO:0000250" key="1"/>
<evidence type="ECO:0000255" key="2">
    <source>
        <dbReference type="PROSITE-ProRule" id="PRU00718"/>
    </source>
</evidence>
<evidence type="ECO:0000269" key="3">
    <source>
    </source>
</evidence>
<evidence type="ECO:0000305" key="4">
    <source>
    </source>
</evidence>
<evidence type="ECO:0007829" key="5">
    <source>
        <dbReference type="PDB" id="7DQX"/>
    </source>
</evidence>
<geneLocation type="plasmid">
    <name>pAO1</name>
</geneLocation>
<protein>
    <recommendedName>
        <fullName>6-hydroxypseudooxynicotine dehydrogenase complex subunit alpha</fullName>
        <ecNumber>1.5.99.14</ecNumber>
    </recommendedName>
    <alternativeName>
        <fullName>Ketone dehydrogenase medium FAD subunit</fullName>
    </alternativeName>
</protein>
<gene>
    <name type="primary">kdhA</name>
    <name type="synonym">kdhM</name>
</gene>
<name>KDHA_PAENI</name>
<organism>
    <name type="scientific">Paenarthrobacter nicotinovorans</name>
    <name type="common">Arthrobacter nicotinovorans</name>
    <dbReference type="NCBI Taxonomy" id="29320"/>
    <lineage>
        <taxon>Bacteria</taxon>
        <taxon>Bacillati</taxon>
        <taxon>Actinomycetota</taxon>
        <taxon>Actinomycetes</taxon>
        <taxon>Micrococcales</taxon>
        <taxon>Micrococcaceae</taxon>
        <taxon>Paenarthrobacter</taxon>
    </lineage>
</organism>
<reference key="1">
    <citation type="journal article" date="1998" name="J. Mol. Biol.">
        <title>Gene structures and properties of enzymes of the plasmid-encoded nicotine catabolism of Arthrobacter nicotinovorans.</title>
        <authorList>
            <person name="Schenk S."/>
            <person name="Hoelz A."/>
            <person name="Kraus B."/>
            <person name="Decker K."/>
        </authorList>
    </citation>
    <scope>NUCLEOTIDE SEQUENCE [GENOMIC DNA]</scope>
    <scope>PROTEIN SEQUENCE OF 1-24</scope>
    <scope>FUNCTION</scope>
    <scope>COFACTOR</scope>
    <scope>SUBUNIT</scope>
</reference>
<reference key="2">
    <citation type="journal article" date="2001" name="J. Bacteriol.">
        <title>Gene cluster on pAO1 of Arthrobacter nicotinovorans involved in degradation of the plant alkaloid nicotine: cloning, purification, and characterization of 2,6-dihydroxypyridine 3-hydroxylase.</title>
        <authorList>
            <person name="Baitsch D."/>
            <person name="Sandu C."/>
            <person name="Brandsch R."/>
            <person name="Igloi G.L."/>
        </authorList>
    </citation>
    <scope>NUCLEOTIDE SEQUENCE [GENOMIC DNA]</scope>
</reference>
<reference key="3">
    <citation type="journal article" date="2003" name="J. Bacteriol.">
        <title>Sequence of the 165-kilobase catabolic plasmid pAO1 from Arthrobacter nicotinovorans and identification of a pAO1-dependent nicotine uptake system.</title>
        <authorList>
            <person name="Igloi G.L."/>
            <person name="Brandsch R."/>
        </authorList>
    </citation>
    <scope>NUCLEOTIDE SEQUENCE [GENOMIC DNA]</scope>
</reference>
<dbReference type="EC" id="1.5.99.14"/>
<dbReference type="EMBL" id="AF373840">
    <property type="protein sequence ID" value="AAK64248.1"/>
    <property type="molecule type" value="Genomic_DNA"/>
</dbReference>
<dbReference type="EMBL" id="AJ306903">
    <property type="protein sequence ID" value="CAC37486.2"/>
    <property type="molecule type" value="Genomic_DNA"/>
</dbReference>
<dbReference type="EMBL" id="AJ507836">
    <property type="protein sequence ID" value="CAD47945.1"/>
    <property type="molecule type" value="Genomic_DNA"/>
</dbReference>
<dbReference type="RefSeq" id="WP_016359456.1">
    <property type="nucleotide sequence ID" value="NZ_JAGINZ010000002.1"/>
</dbReference>
<dbReference type="RefSeq" id="YP_007988771.1">
    <property type="nucleotide sequence ID" value="NC_021229.1"/>
</dbReference>
<dbReference type="PDB" id="7DQX">
    <property type="method" value="X-ray"/>
    <property type="resolution" value="3.44 A"/>
    <property type="chains" value="B/E=1-296"/>
</dbReference>
<dbReference type="PDBsum" id="7DQX"/>
<dbReference type="SMR" id="O87681"/>
<dbReference type="GeneID" id="84020290"/>
<dbReference type="KEGG" id="ag:CAC37486"/>
<dbReference type="BioCyc" id="MetaCyc:MONOMER-981"/>
<dbReference type="UniPathway" id="UPA00106"/>
<dbReference type="GO" id="GO:0034909">
    <property type="term" value="F:6-hydroxypseudooxynicotine dehydrogenase activity"/>
    <property type="evidence" value="ECO:0007669"/>
    <property type="project" value="UniProtKB-EC"/>
</dbReference>
<dbReference type="GO" id="GO:0071949">
    <property type="term" value="F:FAD binding"/>
    <property type="evidence" value="ECO:0007669"/>
    <property type="project" value="InterPro"/>
</dbReference>
<dbReference type="GO" id="GO:0019608">
    <property type="term" value="P:nicotine catabolic process"/>
    <property type="evidence" value="ECO:0007669"/>
    <property type="project" value="UniProtKB-UniPathway"/>
</dbReference>
<dbReference type="Gene3D" id="3.30.465.10">
    <property type="match status" value="1"/>
</dbReference>
<dbReference type="Gene3D" id="3.30.390.50">
    <property type="entry name" value="CO dehydrogenase flavoprotein, C-terminal domain"/>
    <property type="match status" value="1"/>
</dbReference>
<dbReference type="Gene3D" id="3.30.43.10">
    <property type="entry name" value="Uridine Diphospho-n-acetylenolpyruvylglucosamine Reductase, domain 2"/>
    <property type="match status" value="1"/>
</dbReference>
<dbReference type="InterPro" id="IPR005107">
    <property type="entry name" value="CO_DH_flav_C"/>
</dbReference>
<dbReference type="InterPro" id="IPR036683">
    <property type="entry name" value="CO_DH_flav_C_dom_sf"/>
</dbReference>
<dbReference type="InterPro" id="IPR051312">
    <property type="entry name" value="Diverse_Substr_Oxidored"/>
</dbReference>
<dbReference type="InterPro" id="IPR016166">
    <property type="entry name" value="FAD-bd_PCMH"/>
</dbReference>
<dbReference type="InterPro" id="IPR036318">
    <property type="entry name" value="FAD-bd_PCMH-like_sf"/>
</dbReference>
<dbReference type="InterPro" id="IPR016167">
    <property type="entry name" value="FAD-bd_PCMH_sub1"/>
</dbReference>
<dbReference type="InterPro" id="IPR016169">
    <property type="entry name" value="FAD-bd_PCMH_sub2"/>
</dbReference>
<dbReference type="InterPro" id="IPR002346">
    <property type="entry name" value="Mopterin_DH_FAD-bd"/>
</dbReference>
<dbReference type="PANTHER" id="PTHR42659">
    <property type="entry name" value="XANTHINE DEHYDROGENASE SUBUNIT C-RELATED"/>
    <property type="match status" value="1"/>
</dbReference>
<dbReference type="PANTHER" id="PTHR42659:SF2">
    <property type="entry name" value="XANTHINE DEHYDROGENASE SUBUNIT C-RELATED"/>
    <property type="match status" value="1"/>
</dbReference>
<dbReference type="Pfam" id="PF03450">
    <property type="entry name" value="CO_deh_flav_C"/>
    <property type="match status" value="1"/>
</dbReference>
<dbReference type="Pfam" id="PF00941">
    <property type="entry name" value="FAD_binding_5"/>
    <property type="match status" value="1"/>
</dbReference>
<dbReference type="SMART" id="SM01092">
    <property type="entry name" value="CO_deh_flav_C"/>
    <property type="match status" value="1"/>
</dbReference>
<dbReference type="SUPFAM" id="SSF55447">
    <property type="entry name" value="CO dehydrogenase flavoprotein C-terminal domain-like"/>
    <property type="match status" value="1"/>
</dbReference>
<dbReference type="SUPFAM" id="SSF56176">
    <property type="entry name" value="FAD-binding/transporter-associated domain-like"/>
    <property type="match status" value="1"/>
</dbReference>
<dbReference type="PROSITE" id="PS51387">
    <property type="entry name" value="FAD_PCMH"/>
    <property type="match status" value="1"/>
</dbReference>
<keyword id="KW-0002">3D-structure</keyword>
<keyword id="KW-0903">Direct protein sequencing</keyword>
<keyword id="KW-0274">FAD</keyword>
<keyword id="KW-0285">Flavoprotein</keyword>
<keyword id="KW-0560">Oxidoreductase</keyword>
<keyword id="KW-0614">Plasmid</keyword>
<feature type="chain" id="PRO_0000424215" description="6-hydroxypseudooxynicotine dehydrogenase complex subunit alpha">
    <location>
        <begin position="1"/>
        <end position="296"/>
    </location>
</feature>
<feature type="domain" description="FAD-binding PCMH-type" evidence="2">
    <location>
        <begin position="1"/>
        <end position="177"/>
    </location>
</feature>
<feature type="binding site" evidence="1">
    <location>
        <begin position="30"/>
        <end position="37"/>
    </location>
    <ligand>
        <name>FAD</name>
        <dbReference type="ChEBI" id="CHEBI:57692"/>
    </ligand>
</feature>
<feature type="binding site" evidence="1">
    <location>
        <begin position="111"/>
        <end position="115"/>
    </location>
    <ligand>
        <name>FAD</name>
        <dbReference type="ChEBI" id="CHEBI:57692"/>
    </ligand>
</feature>
<feature type="binding site" evidence="1">
    <location>
        <position position="124"/>
    </location>
    <ligand>
        <name>FAD</name>
        <dbReference type="ChEBI" id="CHEBI:57692"/>
    </ligand>
</feature>
<feature type="strand" evidence="5">
    <location>
        <begin position="7"/>
        <end position="10"/>
    </location>
</feature>
<feature type="helix" evidence="5">
    <location>
        <begin position="14"/>
        <end position="25"/>
    </location>
</feature>
<feature type="strand" evidence="5">
    <location>
        <begin position="29"/>
        <end position="33"/>
    </location>
</feature>
<feature type="helix" evidence="5">
    <location>
        <begin position="37"/>
        <end position="42"/>
    </location>
</feature>
<feature type="strand" evidence="5">
    <location>
        <begin position="49"/>
        <end position="53"/>
    </location>
</feature>
<feature type="helix" evidence="5">
    <location>
        <begin position="54"/>
        <end position="56"/>
    </location>
</feature>
<feature type="strand" evidence="5">
    <location>
        <begin position="69"/>
        <end position="73"/>
    </location>
</feature>
<feature type="helix" evidence="5">
    <location>
        <begin position="78"/>
        <end position="82"/>
    </location>
</feature>
<feature type="strand" evidence="5">
    <location>
        <begin position="83"/>
        <end position="85"/>
    </location>
</feature>
<feature type="strand" evidence="5">
    <location>
        <begin position="88"/>
        <end position="91"/>
    </location>
</feature>
<feature type="helix" evidence="5">
    <location>
        <begin position="94"/>
        <end position="97"/>
    </location>
</feature>
<feature type="helix" evidence="5">
    <location>
        <begin position="98"/>
        <end position="100"/>
    </location>
</feature>
<feature type="helix" evidence="5">
    <location>
        <begin position="104"/>
        <end position="107"/>
    </location>
</feature>
<feature type="helix" evidence="5">
    <location>
        <begin position="112"/>
        <end position="118"/>
    </location>
</feature>
<feature type="helix" evidence="5">
    <location>
        <begin position="124"/>
        <end position="130"/>
    </location>
</feature>
<feature type="turn" evidence="5">
    <location>
        <begin position="131"/>
        <end position="133"/>
    </location>
</feature>
<feature type="strand" evidence="5">
    <location>
        <begin position="135"/>
        <end position="139"/>
    </location>
</feature>
<feature type="strand" evidence="5">
    <location>
        <begin position="144"/>
        <end position="148"/>
    </location>
</feature>
<feature type="helix" evidence="5">
    <location>
        <begin position="149"/>
        <end position="152"/>
    </location>
</feature>
<feature type="strand" evidence="5">
    <location>
        <begin position="153"/>
        <end position="155"/>
    </location>
</feature>
<feature type="strand" evidence="5">
    <location>
        <begin position="158"/>
        <end position="160"/>
    </location>
</feature>
<feature type="strand" evidence="5">
    <location>
        <begin position="166"/>
        <end position="173"/>
    </location>
</feature>
<feature type="strand" evidence="5">
    <location>
        <begin position="177"/>
        <end position="186"/>
    </location>
</feature>
<feature type="strand" evidence="5">
    <location>
        <begin position="195"/>
        <end position="205"/>
    </location>
</feature>
<feature type="turn" evidence="5">
    <location>
        <begin position="206"/>
        <end position="208"/>
    </location>
</feature>
<feature type="strand" evidence="5">
    <location>
        <begin position="209"/>
        <end position="223"/>
    </location>
</feature>
<feature type="helix" evidence="5">
    <location>
        <begin position="228"/>
        <end position="234"/>
    </location>
</feature>
<feature type="turn" evidence="5">
    <location>
        <begin position="241"/>
        <end position="243"/>
    </location>
</feature>
<feature type="helix" evidence="5">
    <location>
        <begin position="244"/>
        <end position="250"/>
    </location>
</feature>
<feature type="turn" evidence="5">
    <location>
        <begin position="251"/>
        <end position="254"/>
    </location>
</feature>
<feature type="helix" evidence="5">
    <location>
        <begin position="265"/>
        <end position="270"/>
    </location>
</feature>
<feature type="turn" evidence="5">
    <location>
        <begin position="271"/>
        <end position="274"/>
    </location>
</feature>
<feature type="helix" evidence="5">
    <location>
        <begin position="275"/>
        <end position="283"/>
    </location>
</feature>